<proteinExistence type="inferred from homology"/>
<organism>
    <name type="scientific">Xanthomonas campestris pv. campestris (strain 8004)</name>
    <dbReference type="NCBI Taxonomy" id="314565"/>
    <lineage>
        <taxon>Bacteria</taxon>
        <taxon>Pseudomonadati</taxon>
        <taxon>Pseudomonadota</taxon>
        <taxon>Gammaproteobacteria</taxon>
        <taxon>Lysobacterales</taxon>
        <taxon>Lysobacteraceae</taxon>
        <taxon>Xanthomonas</taxon>
    </lineage>
</organism>
<name>Y3944_XANC8</name>
<feature type="chain" id="PRO_1000001704" description="UPF0758 protein XC_3944">
    <location>
        <begin position="1"/>
        <end position="225"/>
    </location>
</feature>
<feature type="domain" description="MPN" evidence="1">
    <location>
        <begin position="102"/>
        <end position="224"/>
    </location>
</feature>
<feature type="short sequence motif" description="JAMM motif" evidence="1">
    <location>
        <begin position="173"/>
        <end position="186"/>
    </location>
</feature>
<feature type="binding site" evidence="1">
    <location>
        <position position="173"/>
    </location>
    <ligand>
        <name>Zn(2+)</name>
        <dbReference type="ChEBI" id="CHEBI:29105"/>
        <note>catalytic</note>
    </ligand>
</feature>
<feature type="binding site" evidence="1">
    <location>
        <position position="175"/>
    </location>
    <ligand>
        <name>Zn(2+)</name>
        <dbReference type="ChEBI" id="CHEBI:29105"/>
        <note>catalytic</note>
    </ligand>
</feature>
<feature type="binding site" evidence="1">
    <location>
        <position position="186"/>
    </location>
    <ligand>
        <name>Zn(2+)</name>
        <dbReference type="ChEBI" id="CHEBI:29105"/>
        <note>catalytic</note>
    </ligand>
</feature>
<comment type="similarity">
    <text evidence="2">Belongs to the UPF0758 family.</text>
</comment>
<keyword id="KW-0378">Hydrolase</keyword>
<keyword id="KW-0479">Metal-binding</keyword>
<keyword id="KW-0482">Metalloprotease</keyword>
<keyword id="KW-0645">Protease</keyword>
<keyword id="KW-0862">Zinc</keyword>
<accession>Q4UPP0</accession>
<protein>
    <recommendedName>
        <fullName>UPF0758 protein XC_3944</fullName>
    </recommendedName>
</protein>
<sequence>MHINDWPTDERPREKLLARGAAVLSDAELLAIFVGSGLRGQDAVRTARDLLHRHGPLRCLLDRPAKALARLPGLGPASACKLSAALELANRHLLSDLERGEALSDPSSVGRYFSQRLRARNYEVFAALFLDSRHRAIAFEELFTGTIDAAEIHPREVVRRALLHNAAAVVVGHNHPSGNPEPSEADRAVTQRLLQALGLVDIRLLDHFVIGDGRPVSLAERGWVP</sequence>
<evidence type="ECO:0000255" key="1">
    <source>
        <dbReference type="PROSITE-ProRule" id="PRU01182"/>
    </source>
</evidence>
<evidence type="ECO:0000305" key="2"/>
<reference key="1">
    <citation type="journal article" date="2005" name="Genome Res.">
        <title>Comparative and functional genomic analyses of the pathogenicity of phytopathogen Xanthomonas campestris pv. campestris.</title>
        <authorList>
            <person name="Qian W."/>
            <person name="Jia Y."/>
            <person name="Ren S.-X."/>
            <person name="He Y.-Q."/>
            <person name="Feng J.-X."/>
            <person name="Lu L.-F."/>
            <person name="Sun Q."/>
            <person name="Ying G."/>
            <person name="Tang D.-J."/>
            <person name="Tang H."/>
            <person name="Wu W."/>
            <person name="Hao P."/>
            <person name="Wang L."/>
            <person name="Jiang B.-L."/>
            <person name="Zeng S."/>
            <person name="Gu W.-Y."/>
            <person name="Lu G."/>
            <person name="Rong L."/>
            <person name="Tian Y."/>
            <person name="Yao Z."/>
            <person name="Fu G."/>
            <person name="Chen B."/>
            <person name="Fang R."/>
            <person name="Qiang B."/>
            <person name="Chen Z."/>
            <person name="Zhao G.-P."/>
            <person name="Tang J.-L."/>
            <person name="He C."/>
        </authorList>
    </citation>
    <scope>NUCLEOTIDE SEQUENCE [LARGE SCALE GENOMIC DNA]</scope>
    <source>
        <strain>8004</strain>
    </source>
</reference>
<gene>
    <name type="ordered locus">XC_3944</name>
</gene>
<dbReference type="EMBL" id="CP000050">
    <property type="protein sequence ID" value="AAY50983.1"/>
    <property type="molecule type" value="Genomic_DNA"/>
</dbReference>
<dbReference type="SMR" id="Q4UPP0"/>
<dbReference type="KEGG" id="xcb:XC_3944"/>
<dbReference type="HOGENOM" id="CLU_073529_0_0_6"/>
<dbReference type="Proteomes" id="UP000000420">
    <property type="component" value="Chromosome"/>
</dbReference>
<dbReference type="GO" id="GO:0046872">
    <property type="term" value="F:metal ion binding"/>
    <property type="evidence" value="ECO:0007669"/>
    <property type="project" value="UniProtKB-KW"/>
</dbReference>
<dbReference type="GO" id="GO:0008237">
    <property type="term" value="F:metallopeptidase activity"/>
    <property type="evidence" value="ECO:0007669"/>
    <property type="project" value="UniProtKB-KW"/>
</dbReference>
<dbReference type="GO" id="GO:0006508">
    <property type="term" value="P:proteolysis"/>
    <property type="evidence" value="ECO:0007669"/>
    <property type="project" value="UniProtKB-KW"/>
</dbReference>
<dbReference type="CDD" id="cd08071">
    <property type="entry name" value="MPN_DUF2466"/>
    <property type="match status" value="1"/>
</dbReference>
<dbReference type="Gene3D" id="3.40.140.10">
    <property type="entry name" value="Cytidine Deaminase, domain 2"/>
    <property type="match status" value="1"/>
</dbReference>
<dbReference type="InterPro" id="IPR037518">
    <property type="entry name" value="MPN"/>
</dbReference>
<dbReference type="InterPro" id="IPR025657">
    <property type="entry name" value="RadC_JAB"/>
</dbReference>
<dbReference type="InterPro" id="IPR010994">
    <property type="entry name" value="RuvA_2-like"/>
</dbReference>
<dbReference type="InterPro" id="IPR001405">
    <property type="entry name" value="UPF0758"/>
</dbReference>
<dbReference type="InterPro" id="IPR020891">
    <property type="entry name" value="UPF0758_CS"/>
</dbReference>
<dbReference type="InterPro" id="IPR046778">
    <property type="entry name" value="UPF0758_N"/>
</dbReference>
<dbReference type="NCBIfam" id="NF000642">
    <property type="entry name" value="PRK00024.1"/>
    <property type="match status" value="1"/>
</dbReference>
<dbReference type="NCBIfam" id="TIGR00608">
    <property type="entry name" value="radc"/>
    <property type="match status" value="1"/>
</dbReference>
<dbReference type="PANTHER" id="PTHR30471">
    <property type="entry name" value="DNA REPAIR PROTEIN RADC"/>
    <property type="match status" value="1"/>
</dbReference>
<dbReference type="PANTHER" id="PTHR30471:SF3">
    <property type="entry name" value="UPF0758 PROTEIN YEES-RELATED"/>
    <property type="match status" value="1"/>
</dbReference>
<dbReference type="Pfam" id="PF04002">
    <property type="entry name" value="RadC"/>
    <property type="match status" value="1"/>
</dbReference>
<dbReference type="Pfam" id="PF20582">
    <property type="entry name" value="UPF0758_N"/>
    <property type="match status" value="1"/>
</dbReference>
<dbReference type="SUPFAM" id="SSF47781">
    <property type="entry name" value="RuvA domain 2-like"/>
    <property type="match status" value="1"/>
</dbReference>
<dbReference type="PROSITE" id="PS50249">
    <property type="entry name" value="MPN"/>
    <property type="match status" value="1"/>
</dbReference>
<dbReference type="PROSITE" id="PS01302">
    <property type="entry name" value="UPF0758"/>
    <property type="match status" value="1"/>
</dbReference>